<protein>
    <recommendedName>
        <fullName evidence="1">Small ribosomal subunit protein bS20</fullName>
    </recommendedName>
    <alternativeName>
        <fullName evidence="3">30S ribosomal protein S20</fullName>
    </alternativeName>
</protein>
<accession>A1TLC1</accession>
<sequence>MASAKPKKKNPRLASGRKRARQDVKLNAANTSLRSKYRTAVKNVEKAVLAGDKTKASELFAKMQSVVDTIADKGIFHKNKAARDKSRLSAKVKALALAA</sequence>
<feature type="chain" id="PRO_1000014536" description="Small ribosomal subunit protein bS20">
    <location>
        <begin position="1"/>
        <end position="99"/>
    </location>
</feature>
<feature type="region of interest" description="Disordered" evidence="2">
    <location>
        <begin position="1"/>
        <end position="29"/>
    </location>
</feature>
<feature type="compositionally biased region" description="Basic residues" evidence="2">
    <location>
        <begin position="1"/>
        <end position="20"/>
    </location>
</feature>
<comment type="function">
    <text evidence="1">Binds directly to 16S ribosomal RNA.</text>
</comment>
<comment type="similarity">
    <text evidence="1">Belongs to the bacterial ribosomal protein bS20 family.</text>
</comment>
<reference key="1">
    <citation type="submission" date="2006-12" db="EMBL/GenBank/DDBJ databases">
        <title>Complete sequence of Acidovorax avenae subsp. citrulli AAC00-1.</title>
        <authorList>
            <person name="Copeland A."/>
            <person name="Lucas S."/>
            <person name="Lapidus A."/>
            <person name="Barry K."/>
            <person name="Detter J.C."/>
            <person name="Glavina del Rio T."/>
            <person name="Dalin E."/>
            <person name="Tice H."/>
            <person name="Pitluck S."/>
            <person name="Kiss H."/>
            <person name="Brettin T."/>
            <person name="Bruce D."/>
            <person name="Han C."/>
            <person name="Tapia R."/>
            <person name="Gilna P."/>
            <person name="Schmutz J."/>
            <person name="Larimer F."/>
            <person name="Land M."/>
            <person name="Hauser L."/>
            <person name="Kyrpides N."/>
            <person name="Kim E."/>
            <person name="Stahl D."/>
            <person name="Richardson P."/>
        </authorList>
    </citation>
    <scope>NUCLEOTIDE SEQUENCE [LARGE SCALE GENOMIC DNA]</scope>
    <source>
        <strain>AAC00-1</strain>
    </source>
</reference>
<dbReference type="EMBL" id="CP000512">
    <property type="protein sequence ID" value="ABM31759.1"/>
    <property type="molecule type" value="Genomic_DNA"/>
</dbReference>
<dbReference type="RefSeq" id="WP_011794312.1">
    <property type="nucleotide sequence ID" value="NC_008752.1"/>
</dbReference>
<dbReference type="SMR" id="A1TLC1"/>
<dbReference type="STRING" id="397945.Aave_1167"/>
<dbReference type="GeneID" id="79790826"/>
<dbReference type="KEGG" id="aav:Aave_1167"/>
<dbReference type="eggNOG" id="COG0268">
    <property type="taxonomic scope" value="Bacteria"/>
</dbReference>
<dbReference type="HOGENOM" id="CLU_160655_4_0_4"/>
<dbReference type="OrthoDB" id="9807974at2"/>
<dbReference type="Proteomes" id="UP000002596">
    <property type="component" value="Chromosome"/>
</dbReference>
<dbReference type="GO" id="GO:0005829">
    <property type="term" value="C:cytosol"/>
    <property type="evidence" value="ECO:0007669"/>
    <property type="project" value="TreeGrafter"/>
</dbReference>
<dbReference type="GO" id="GO:0015935">
    <property type="term" value="C:small ribosomal subunit"/>
    <property type="evidence" value="ECO:0007669"/>
    <property type="project" value="TreeGrafter"/>
</dbReference>
<dbReference type="GO" id="GO:0070181">
    <property type="term" value="F:small ribosomal subunit rRNA binding"/>
    <property type="evidence" value="ECO:0007669"/>
    <property type="project" value="TreeGrafter"/>
</dbReference>
<dbReference type="GO" id="GO:0003735">
    <property type="term" value="F:structural constituent of ribosome"/>
    <property type="evidence" value="ECO:0007669"/>
    <property type="project" value="InterPro"/>
</dbReference>
<dbReference type="GO" id="GO:0006412">
    <property type="term" value="P:translation"/>
    <property type="evidence" value="ECO:0007669"/>
    <property type="project" value="UniProtKB-UniRule"/>
</dbReference>
<dbReference type="FunFam" id="1.20.58.110:FF:000001">
    <property type="entry name" value="30S ribosomal protein S20"/>
    <property type="match status" value="1"/>
</dbReference>
<dbReference type="Gene3D" id="1.20.58.110">
    <property type="entry name" value="Ribosomal protein S20"/>
    <property type="match status" value="1"/>
</dbReference>
<dbReference type="HAMAP" id="MF_00500">
    <property type="entry name" value="Ribosomal_bS20"/>
    <property type="match status" value="1"/>
</dbReference>
<dbReference type="InterPro" id="IPR002583">
    <property type="entry name" value="Ribosomal_bS20"/>
</dbReference>
<dbReference type="InterPro" id="IPR036510">
    <property type="entry name" value="Ribosomal_bS20_sf"/>
</dbReference>
<dbReference type="NCBIfam" id="TIGR00029">
    <property type="entry name" value="S20"/>
    <property type="match status" value="1"/>
</dbReference>
<dbReference type="PANTHER" id="PTHR33398">
    <property type="entry name" value="30S RIBOSOMAL PROTEIN S20"/>
    <property type="match status" value="1"/>
</dbReference>
<dbReference type="PANTHER" id="PTHR33398:SF1">
    <property type="entry name" value="SMALL RIBOSOMAL SUBUNIT PROTEIN BS20C"/>
    <property type="match status" value="1"/>
</dbReference>
<dbReference type="Pfam" id="PF01649">
    <property type="entry name" value="Ribosomal_S20p"/>
    <property type="match status" value="1"/>
</dbReference>
<dbReference type="SUPFAM" id="SSF46992">
    <property type="entry name" value="Ribosomal protein S20"/>
    <property type="match status" value="1"/>
</dbReference>
<evidence type="ECO:0000255" key="1">
    <source>
        <dbReference type="HAMAP-Rule" id="MF_00500"/>
    </source>
</evidence>
<evidence type="ECO:0000256" key="2">
    <source>
        <dbReference type="SAM" id="MobiDB-lite"/>
    </source>
</evidence>
<evidence type="ECO:0000305" key="3"/>
<keyword id="KW-0687">Ribonucleoprotein</keyword>
<keyword id="KW-0689">Ribosomal protein</keyword>
<keyword id="KW-0694">RNA-binding</keyword>
<keyword id="KW-0699">rRNA-binding</keyword>
<name>RS20_PARC0</name>
<gene>
    <name evidence="1" type="primary">rpsT</name>
    <name type="ordered locus">Aave_1167</name>
</gene>
<proteinExistence type="inferred from homology"/>
<organism>
    <name type="scientific">Paracidovorax citrulli (strain AAC00-1)</name>
    <name type="common">Acidovorax citrulli</name>
    <dbReference type="NCBI Taxonomy" id="397945"/>
    <lineage>
        <taxon>Bacteria</taxon>
        <taxon>Pseudomonadati</taxon>
        <taxon>Pseudomonadota</taxon>
        <taxon>Betaproteobacteria</taxon>
        <taxon>Burkholderiales</taxon>
        <taxon>Comamonadaceae</taxon>
        <taxon>Paracidovorax</taxon>
    </lineage>
</organism>